<reference key="1">
    <citation type="journal article" date="2011" name="J. Bacteriol.">
        <title>Comparative genomics of 28 Salmonella enterica isolates: evidence for CRISPR-mediated adaptive sublineage evolution.</title>
        <authorList>
            <person name="Fricke W.F."/>
            <person name="Mammel M.K."/>
            <person name="McDermott P.F."/>
            <person name="Tartera C."/>
            <person name="White D.G."/>
            <person name="Leclerc J.E."/>
            <person name="Ravel J."/>
            <person name="Cebula T.A."/>
        </authorList>
    </citation>
    <scope>NUCLEOTIDE SEQUENCE [LARGE SCALE GENOMIC DNA]</scope>
    <source>
        <strain>SL254</strain>
    </source>
</reference>
<accession>B4SV20</accession>
<comment type="similarity">
    <text evidence="1">Belongs to the UPF0253 family.</text>
</comment>
<feature type="chain" id="PRO_1000136544" description="UPF0253 protein YaeP">
    <location>
        <begin position="1"/>
        <end position="66"/>
    </location>
</feature>
<gene>
    <name evidence="1" type="primary">yaeP</name>
    <name type="ordered locus">SNSL254_A0260</name>
</gene>
<dbReference type="EMBL" id="CP001113">
    <property type="protein sequence ID" value="ACF64226.1"/>
    <property type="molecule type" value="Genomic_DNA"/>
</dbReference>
<dbReference type="RefSeq" id="WP_001518678.1">
    <property type="nucleotide sequence ID" value="NZ_CCMR01000003.1"/>
</dbReference>
<dbReference type="SMR" id="B4SV20"/>
<dbReference type="KEGG" id="see:SNSL254_A0260"/>
<dbReference type="HOGENOM" id="CLU_190008_0_0_6"/>
<dbReference type="Proteomes" id="UP000008824">
    <property type="component" value="Chromosome"/>
</dbReference>
<dbReference type="HAMAP" id="MF_01064">
    <property type="entry name" value="UPF0253"/>
    <property type="match status" value="1"/>
</dbReference>
<dbReference type="InterPro" id="IPR009624">
    <property type="entry name" value="UPF0253"/>
</dbReference>
<dbReference type="NCBIfam" id="NF003436">
    <property type="entry name" value="PRK04964.1"/>
    <property type="match status" value="1"/>
</dbReference>
<dbReference type="Pfam" id="PF06786">
    <property type="entry name" value="UPF0253"/>
    <property type="match status" value="1"/>
</dbReference>
<proteinExistence type="inferred from homology"/>
<sequence>MEKYCELVRKRYAEIASGDLGYVPDALGCVLKVLNEVAADSALSESVREKAAYAAANLLVSDYVNE</sequence>
<organism>
    <name type="scientific">Salmonella newport (strain SL254)</name>
    <dbReference type="NCBI Taxonomy" id="423368"/>
    <lineage>
        <taxon>Bacteria</taxon>
        <taxon>Pseudomonadati</taxon>
        <taxon>Pseudomonadota</taxon>
        <taxon>Gammaproteobacteria</taxon>
        <taxon>Enterobacterales</taxon>
        <taxon>Enterobacteriaceae</taxon>
        <taxon>Salmonella</taxon>
    </lineage>
</organism>
<protein>
    <recommendedName>
        <fullName evidence="1">UPF0253 protein YaeP</fullName>
    </recommendedName>
</protein>
<name>YAEP_SALNS</name>
<evidence type="ECO:0000255" key="1">
    <source>
        <dbReference type="HAMAP-Rule" id="MF_01064"/>
    </source>
</evidence>